<comment type="function">
    <text evidence="1">Binds 23S rRNA and is also seen to make contacts with the A and possibly P site tRNAs.</text>
</comment>
<comment type="subunit">
    <text evidence="1">Part of the 50S ribosomal subunit.</text>
</comment>
<comment type="similarity">
    <text evidence="1">Belongs to the universal ribosomal protein uL16 family.</text>
</comment>
<name>RL16_PSEA6</name>
<keyword id="KW-0687">Ribonucleoprotein</keyword>
<keyword id="KW-0689">Ribosomal protein</keyword>
<keyword id="KW-0694">RNA-binding</keyword>
<keyword id="KW-0699">rRNA-binding</keyword>
<keyword id="KW-0820">tRNA-binding</keyword>
<organism>
    <name type="scientific">Pseudoalteromonas atlantica (strain T6c / ATCC BAA-1087)</name>
    <dbReference type="NCBI Taxonomy" id="3042615"/>
    <lineage>
        <taxon>Bacteria</taxon>
        <taxon>Pseudomonadati</taxon>
        <taxon>Pseudomonadota</taxon>
        <taxon>Gammaproteobacteria</taxon>
        <taxon>Alteromonadales</taxon>
        <taxon>Alteromonadaceae</taxon>
        <taxon>Paraglaciecola</taxon>
    </lineage>
</organism>
<evidence type="ECO:0000255" key="1">
    <source>
        <dbReference type="HAMAP-Rule" id="MF_01342"/>
    </source>
</evidence>
<evidence type="ECO:0000305" key="2"/>
<protein>
    <recommendedName>
        <fullName evidence="1">Large ribosomal subunit protein uL16</fullName>
    </recommendedName>
    <alternativeName>
        <fullName evidence="2">50S ribosomal protein L16</fullName>
    </alternativeName>
</protein>
<gene>
    <name evidence="1" type="primary">rplP</name>
    <name type="ordered locus">Patl_0476</name>
</gene>
<proteinExistence type="inferred from homology"/>
<feature type="chain" id="PRO_1000054679" description="Large ribosomal subunit protein uL16">
    <location>
        <begin position="1"/>
        <end position="136"/>
    </location>
</feature>
<accession>Q15YN2</accession>
<sequence length="136" mass="15505">MLQPKRMKFRKMHKGRNRGYAAGDSVSFGTFGLKSVGRGRMTARQIEAARRAMTRAVKRQGKIWIRVFPDKPITEKPLEVRQGKGKGNVEYWVCQIQPGRVLYEMEGVPESVAREAFELAASKLPFKTTFVTRTVM</sequence>
<reference key="1">
    <citation type="submission" date="2006-06" db="EMBL/GenBank/DDBJ databases">
        <title>Complete sequence of Pseudoalteromonas atlantica T6c.</title>
        <authorList>
            <consortium name="US DOE Joint Genome Institute"/>
            <person name="Copeland A."/>
            <person name="Lucas S."/>
            <person name="Lapidus A."/>
            <person name="Barry K."/>
            <person name="Detter J.C."/>
            <person name="Glavina del Rio T."/>
            <person name="Hammon N."/>
            <person name="Israni S."/>
            <person name="Dalin E."/>
            <person name="Tice H."/>
            <person name="Pitluck S."/>
            <person name="Saunders E."/>
            <person name="Brettin T."/>
            <person name="Bruce D."/>
            <person name="Han C."/>
            <person name="Tapia R."/>
            <person name="Gilna P."/>
            <person name="Schmutz J."/>
            <person name="Larimer F."/>
            <person name="Land M."/>
            <person name="Hauser L."/>
            <person name="Kyrpides N."/>
            <person name="Kim E."/>
            <person name="Karls A.C."/>
            <person name="Bartlett D."/>
            <person name="Higgins B.P."/>
            <person name="Richardson P."/>
        </authorList>
    </citation>
    <scope>NUCLEOTIDE SEQUENCE [LARGE SCALE GENOMIC DNA]</scope>
    <source>
        <strain>T6c / ATCC BAA-1087</strain>
    </source>
</reference>
<dbReference type="EMBL" id="CP000388">
    <property type="protein sequence ID" value="ABG39006.1"/>
    <property type="molecule type" value="Genomic_DNA"/>
</dbReference>
<dbReference type="RefSeq" id="WP_006992675.1">
    <property type="nucleotide sequence ID" value="NC_008228.1"/>
</dbReference>
<dbReference type="SMR" id="Q15YN2"/>
<dbReference type="STRING" id="342610.Patl_0476"/>
<dbReference type="KEGG" id="pat:Patl_0476"/>
<dbReference type="eggNOG" id="COG0197">
    <property type="taxonomic scope" value="Bacteria"/>
</dbReference>
<dbReference type="HOGENOM" id="CLU_078858_2_1_6"/>
<dbReference type="OrthoDB" id="9802589at2"/>
<dbReference type="Proteomes" id="UP000001981">
    <property type="component" value="Chromosome"/>
</dbReference>
<dbReference type="GO" id="GO:0022625">
    <property type="term" value="C:cytosolic large ribosomal subunit"/>
    <property type="evidence" value="ECO:0007669"/>
    <property type="project" value="TreeGrafter"/>
</dbReference>
<dbReference type="GO" id="GO:0019843">
    <property type="term" value="F:rRNA binding"/>
    <property type="evidence" value="ECO:0007669"/>
    <property type="project" value="UniProtKB-UniRule"/>
</dbReference>
<dbReference type="GO" id="GO:0003735">
    <property type="term" value="F:structural constituent of ribosome"/>
    <property type="evidence" value="ECO:0007669"/>
    <property type="project" value="InterPro"/>
</dbReference>
<dbReference type="GO" id="GO:0000049">
    <property type="term" value="F:tRNA binding"/>
    <property type="evidence" value="ECO:0007669"/>
    <property type="project" value="UniProtKB-KW"/>
</dbReference>
<dbReference type="GO" id="GO:0006412">
    <property type="term" value="P:translation"/>
    <property type="evidence" value="ECO:0007669"/>
    <property type="project" value="UniProtKB-UniRule"/>
</dbReference>
<dbReference type="CDD" id="cd01433">
    <property type="entry name" value="Ribosomal_L16_L10e"/>
    <property type="match status" value="1"/>
</dbReference>
<dbReference type="FunFam" id="3.90.1170.10:FF:000001">
    <property type="entry name" value="50S ribosomal protein L16"/>
    <property type="match status" value="1"/>
</dbReference>
<dbReference type="Gene3D" id="3.90.1170.10">
    <property type="entry name" value="Ribosomal protein L10e/L16"/>
    <property type="match status" value="1"/>
</dbReference>
<dbReference type="HAMAP" id="MF_01342">
    <property type="entry name" value="Ribosomal_uL16"/>
    <property type="match status" value="1"/>
</dbReference>
<dbReference type="InterPro" id="IPR047873">
    <property type="entry name" value="Ribosomal_uL16"/>
</dbReference>
<dbReference type="InterPro" id="IPR000114">
    <property type="entry name" value="Ribosomal_uL16_bact-type"/>
</dbReference>
<dbReference type="InterPro" id="IPR020798">
    <property type="entry name" value="Ribosomal_uL16_CS"/>
</dbReference>
<dbReference type="InterPro" id="IPR016180">
    <property type="entry name" value="Ribosomal_uL16_dom"/>
</dbReference>
<dbReference type="InterPro" id="IPR036920">
    <property type="entry name" value="Ribosomal_uL16_sf"/>
</dbReference>
<dbReference type="NCBIfam" id="TIGR01164">
    <property type="entry name" value="rplP_bact"/>
    <property type="match status" value="1"/>
</dbReference>
<dbReference type="PANTHER" id="PTHR12220">
    <property type="entry name" value="50S/60S RIBOSOMAL PROTEIN L16"/>
    <property type="match status" value="1"/>
</dbReference>
<dbReference type="PANTHER" id="PTHR12220:SF13">
    <property type="entry name" value="LARGE RIBOSOMAL SUBUNIT PROTEIN UL16M"/>
    <property type="match status" value="1"/>
</dbReference>
<dbReference type="Pfam" id="PF00252">
    <property type="entry name" value="Ribosomal_L16"/>
    <property type="match status" value="1"/>
</dbReference>
<dbReference type="PRINTS" id="PR00060">
    <property type="entry name" value="RIBOSOMALL16"/>
</dbReference>
<dbReference type="SUPFAM" id="SSF54686">
    <property type="entry name" value="Ribosomal protein L16p/L10e"/>
    <property type="match status" value="1"/>
</dbReference>
<dbReference type="PROSITE" id="PS00586">
    <property type="entry name" value="RIBOSOMAL_L16_1"/>
    <property type="match status" value="1"/>
</dbReference>